<feature type="chain" id="PRO_0000066235" description="Uncharacterized protein in glgB 5'region">
    <location>
        <begin position="1"/>
        <end position="57" status="greater than"/>
    </location>
</feature>
<feature type="transmembrane region" description="Helical" evidence="1">
    <location>
        <begin position="24"/>
        <end position="44"/>
    </location>
</feature>
<feature type="non-terminal residue">
    <location>
        <position position="57"/>
    </location>
</feature>
<sequence>MAPTLYDFHHLPHVKTQNESKKALWVTLLLTMFFTAVEIIGGLISNSLALLSDSAHM</sequence>
<protein>
    <recommendedName>
        <fullName>Uncharacterized protein in glgB 5'region</fullName>
    </recommendedName>
</protein>
<comment type="subcellular location">
    <subcellularLocation>
        <location evidence="2">Cell membrane</location>
        <topology evidence="2">Multi-pass membrane protein</topology>
    </subcellularLocation>
</comment>
<comment type="similarity">
    <text evidence="2">To cation A.eutrophus efflux system protein CzcD.</text>
</comment>
<name>YGLB_BACCL</name>
<evidence type="ECO:0000255" key="1"/>
<evidence type="ECO:0000305" key="2"/>
<dbReference type="EMBL" id="Z14057">
    <property type="protein sequence ID" value="CAA78442.1"/>
    <property type="molecule type" value="Genomic_DNA"/>
</dbReference>
<dbReference type="PIR" id="A56639">
    <property type="entry name" value="A56639"/>
</dbReference>
<dbReference type="SMR" id="P55237"/>
<dbReference type="GO" id="GO:0005886">
    <property type="term" value="C:plasma membrane"/>
    <property type="evidence" value="ECO:0007669"/>
    <property type="project" value="UniProtKB-SubCell"/>
</dbReference>
<dbReference type="Gene3D" id="1.20.1510.10">
    <property type="entry name" value="Cation efflux protein transmembrane domain"/>
    <property type="match status" value="1"/>
</dbReference>
<dbReference type="InterPro" id="IPR027469">
    <property type="entry name" value="Cation_efflux_TMD_sf"/>
</dbReference>
<dbReference type="SUPFAM" id="SSF161111">
    <property type="entry name" value="Cation efflux protein transmembrane domain-like"/>
    <property type="match status" value="1"/>
</dbReference>
<reference key="1">
    <citation type="journal article" date="1992" name="DNA Seq.">
        <title>The glgB gene from the thermophile Bacillus caldolyticus encodes a thermolabile branching enzyme.</title>
        <authorList>
            <person name="Kiel J.A.K.W."/>
            <person name="Boels J.M."/>
            <person name="Beldman G."/>
            <person name="Venema G."/>
        </authorList>
    </citation>
    <scope>NUCLEOTIDE SEQUENCE [GENOMIC DNA]</scope>
</reference>
<proteinExistence type="predicted"/>
<accession>P55237</accession>
<keyword id="KW-1003">Cell membrane</keyword>
<keyword id="KW-0472">Membrane</keyword>
<keyword id="KW-0812">Transmembrane</keyword>
<keyword id="KW-1133">Transmembrane helix</keyword>
<organism>
    <name type="scientific">Bacillus caldolyticus</name>
    <dbReference type="NCBI Taxonomy" id="1394"/>
    <lineage>
        <taxon>Bacteria</taxon>
        <taxon>Bacillati</taxon>
        <taxon>Bacillota</taxon>
        <taxon>Bacilli</taxon>
        <taxon>Bacillales</taxon>
        <taxon>Anoxybacillaceae</taxon>
        <taxon>Geobacillus</taxon>
        <taxon>Geobacillus thermoleovorans group</taxon>
    </lineage>
</organism>